<dbReference type="EMBL" id="DS027051">
    <property type="protein sequence ID" value="EAW11801.1"/>
    <property type="molecule type" value="Genomic_DNA"/>
</dbReference>
<dbReference type="RefSeq" id="XP_001273227.1">
    <property type="nucleotide sequence ID" value="XM_001273226.1"/>
</dbReference>
<dbReference type="SMR" id="A1CD74"/>
<dbReference type="EnsemblFungi" id="EAW11801">
    <property type="protein sequence ID" value="EAW11801"/>
    <property type="gene ID" value="ACLA_005570"/>
</dbReference>
<dbReference type="GeneID" id="4705390"/>
<dbReference type="KEGG" id="act:ACLA_005570"/>
<dbReference type="VEuPathDB" id="FungiDB:ACLA_005570"/>
<dbReference type="eggNOG" id="KOG0998">
    <property type="taxonomic scope" value="Eukaryota"/>
</dbReference>
<dbReference type="HOGENOM" id="CLU_001963_1_0_1"/>
<dbReference type="OMA" id="GMPGQWG"/>
<dbReference type="OrthoDB" id="2015333at2759"/>
<dbReference type="Proteomes" id="UP000006701">
    <property type="component" value="Unassembled WGS sequence"/>
</dbReference>
<dbReference type="GO" id="GO:0030479">
    <property type="term" value="C:actin cortical patch"/>
    <property type="evidence" value="ECO:0007669"/>
    <property type="project" value="UniProtKB-SubCell"/>
</dbReference>
<dbReference type="GO" id="GO:0010008">
    <property type="term" value="C:endosome membrane"/>
    <property type="evidence" value="ECO:0007669"/>
    <property type="project" value="UniProtKB-SubCell"/>
</dbReference>
<dbReference type="GO" id="GO:0005886">
    <property type="term" value="C:plasma membrane"/>
    <property type="evidence" value="ECO:0007669"/>
    <property type="project" value="UniProtKB-SubCell"/>
</dbReference>
<dbReference type="GO" id="GO:0003779">
    <property type="term" value="F:actin binding"/>
    <property type="evidence" value="ECO:0007669"/>
    <property type="project" value="UniProtKB-KW"/>
</dbReference>
<dbReference type="GO" id="GO:0005509">
    <property type="term" value="F:calcium ion binding"/>
    <property type="evidence" value="ECO:0007669"/>
    <property type="project" value="InterPro"/>
</dbReference>
<dbReference type="GO" id="GO:0006897">
    <property type="term" value="P:endocytosis"/>
    <property type="evidence" value="ECO:0007669"/>
    <property type="project" value="UniProtKB-KW"/>
</dbReference>
<dbReference type="GO" id="GO:0016197">
    <property type="term" value="P:endosomal transport"/>
    <property type="evidence" value="ECO:0007669"/>
    <property type="project" value="TreeGrafter"/>
</dbReference>
<dbReference type="CDD" id="cd00052">
    <property type="entry name" value="EH"/>
    <property type="match status" value="2"/>
</dbReference>
<dbReference type="FunFam" id="1.10.238.10:FF:000349">
    <property type="entry name" value="Actin cytoskeleton-regulatory complex protein PAN1"/>
    <property type="match status" value="1"/>
</dbReference>
<dbReference type="Gene3D" id="1.10.238.10">
    <property type="entry name" value="EF-hand"/>
    <property type="match status" value="2"/>
</dbReference>
<dbReference type="InterPro" id="IPR013182">
    <property type="entry name" value="DUF1720"/>
</dbReference>
<dbReference type="InterPro" id="IPR011992">
    <property type="entry name" value="EF-hand-dom_pair"/>
</dbReference>
<dbReference type="InterPro" id="IPR002048">
    <property type="entry name" value="EF_hand_dom"/>
</dbReference>
<dbReference type="InterPro" id="IPR000261">
    <property type="entry name" value="EH_dom"/>
</dbReference>
<dbReference type="InterPro" id="IPR003124">
    <property type="entry name" value="WH2_dom"/>
</dbReference>
<dbReference type="PANTHER" id="PTHR11216">
    <property type="entry name" value="EH DOMAIN"/>
    <property type="match status" value="1"/>
</dbReference>
<dbReference type="Pfam" id="PF08226">
    <property type="entry name" value="DUF1720"/>
    <property type="match status" value="1"/>
</dbReference>
<dbReference type="Pfam" id="PF12763">
    <property type="entry name" value="EH"/>
    <property type="match status" value="2"/>
</dbReference>
<dbReference type="Pfam" id="PF02205">
    <property type="entry name" value="WH2"/>
    <property type="match status" value="1"/>
</dbReference>
<dbReference type="SMART" id="SM00027">
    <property type="entry name" value="EH"/>
    <property type="match status" value="2"/>
</dbReference>
<dbReference type="SUPFAM" id="SSF47473">
    <property type="entry name" value="EF-hand"/>
    <property type="match status" value="2"/>
</dbReference>
<dbReference type="PROSITE" id="PS50222">
    <property type="entry name" value="EF_HAND_2"/>
    <property type="match status" value="2"/>
</dbReference>
<dbReference type="PROSITE" id="PS50031">
    <property type="entry name" value="EH"/>
    <property type="match status" value="2"/>
</dbReference>
<dbReference type="PROSITE" id="PS51082">
    <property type="entry name" value="WH2"/>
    <property type="match status" value="1"/>
</dbReference>
<evidence type="ECO:0000250" key="1"/>
<evidence type="ECO:0000255" key="2"/>
<evidence type="ECO:0000255" key="3">
    <source>
        <dbReference type="PROSITE-ProRule" id="PRU00077"/>
    </source>
</evidence>
<evidence type="ECO:0000255" key="4">
    <source>
        <dbReference type="PROSITE-ProRule" id="PRU00406"/>
    </source>
</evidence>
<evidence type="ECO:0000255" key="5">
    <source>
        <dbReference type="PROSITE-ProRule" id="PRU00448"/>
    </source>
</evidence>
<evidence type="ECO:0000256" key="6">
    <source>
        <dbReference type="SAM" id="MobiDB-lite"/>
    </source>
</evidence>
<evidence type="ECO:0000305" key="7"/>
<keyword id="KW-0009">Actin-binding</keyword>
<keyword id="KW-1003">Cell membrane</keyword>
<keyword id="KW-0175">Coiled coil</keyword>
<keyword id="KW-0963">Cytoplasm</keyword>
<keyword id="KW-0206">Cytoskeleton</keyword>
<keyword id="KW-0254">Endocytosis</keyword>
<keyword id="KW-0967">Endosome</keyword>
<keyword id="KW-0472">Membrane</keyword>
<keyword id="KW-1185">Reference proteome</keyword>
<keyword id="KW-0677">Repeat</keyword>
<comment type="function">
    <text evidence="1">Component of the PAN1 actin cytoskeleton-regulatory complex required for the internalization of endosomes during actin-coupled endocytosis. The complex links the site of endocytosis to the cell membrane-associated actin cytoskeleton. Mediates uptake of external molecules and vacuolar degradation of plasma membrane proteins. Plays a role in the proper organization of the cell membrane-associated actin cytoskeleton and promotes its destabilization (By similarity).</text>
</comment>
<comment type="subunit">
    <text evidence="1">Component of the PAN1 actin cytoskeleton-regulatory complex.</text>
</comment>
<comment type="subcellular location">
    <subcellularLocation>
        <location evidence="1">Cell membrane</location>
        <topology evidence="1">Peripheral membrane protein</topology>
        <orientation evidence="1">Cytoplasmic side</orientation>
    </subcellularLocation>
    <subcellularLocation>
        <location evidence="1">Endosome membrane</location>
        <topology evidence="1">Peripheral membrane protein</topology>
        <orientation evidence="1">Cytoplasmic side</orientation>
    </subcellularLocation>
    <subcellularLocation>
        <location evidence="1">Cytoplasm</location>
        <location evidence="1">Cytoskeleton</location>
        <location evidence="1">Actin patch</location>
    </subcellularLocation>
    <text evidence="1">Cytoplasmic and cortical actin patches.</text>
</comment>
<comment type="similarity">
    <text evidence="7">Belongs to the PAN1 family.</text>
</comment>
<organism>
    <name type="scientific">Aspergillus clavatus (strain ATCC 1007 / CBS 513.65 / DSM 816 / NCTC 3887 / NRRL 1 / QM 1276 / 107)</name>
    <dbReference type="NCBI Taxonomy" id="344612"/>
    <lineage>
        <taxon>Eukaryota</taxon>
        <taxon>Fungi</taxon>
        <taxon>Dikarya</taxon>
        <taxon>Ascomycota</taxon>
        <taxon>Pezizomycotina</taxon>
        <taxon>Eurotiomycetes</taxon>
        <taxon>Eurotiomycetidae</taxon>
        <taxon>Eurotiales</taxon>
        <taxon>Aspergillaceae</taxon>
        <taxon>Aspergillus</taxon>
        <taxon>Aspergillus subgen. Fumigati</taxon>
    </lineage>
</organism>
<accession>A1CD74</accession>
<reference key="1">
    <citation type="journal article" date="2008" name="PLoS Genet.">
        <title>Genomic islands in the pathogenic filamentous fungus Aspergillus fumigatus.</title>
        <authorList>
            <person name="Fedorova N.D."/>
            <person name="Khaldi N."/>
            <person name="Joardar V.S."/>
            <person name="Maiti R."/>
            <person name="Amedeo P."/>
            <person name="Anderson M.J."/>
            <person name="Crabtree J."/>
            <person name="Silva J.C."/>
            <person name="Badger J.H."/>
            <person name="Albarraq A."/>
            <person name="Angiuoli S."/>
            <person name="Bussey H."/>
            <person name="Bowyer P."/>
            <person name="Cotty P.J."/>
            <person name="Dyer P.S."/>
            <person name="Egan A."/>
            <person name="Galens K."/>
            <person name="Fraser-Liggett C.M."/>
            <person name="Haas B.J."/>
            <person name="Inman J.M."/>
            <person name="Kent R."/>
            <person name="Lemieux S."/>
            <person name="Malavazi I."/>
            <person name="Orvis J."/>
            <person name="Roemer T."/>
            <person name="Ronning C.M."/>
            <person name="Sundaram J.P."/>
            <person name="Sutton G."/>
            <person name="Turner G."/>
            <person name="Venter J.C."/>
            <person name="White O.R."/>
            <person name="Whitty B.R."/>
            <person name="Youngman P."/>
            <person name="Wolfe K.H."/>
            <person name="Goldman G.H."/>
            <person name="Wortman J.R."/>
            <person name="Jiang B."/>
            <person name="Denning D.W."/>
            <person name="Nierman W.C."/>
        </authorList>
    </citation>
    <scope>NUCLEOTIDE SEQUENCE [LARGE SCALE GENOMIC DNA]</scope>
    <source>
        <strain>ATCC 1007 / CBS 513.65 / DSM 816 / NCTC 3887 / NRRL 1 / QM 1276 / 107</strain>
    </source>
</reference>
<sequence length="1485" mass="160694">MYSSSNSFMGGANSARPGQPPFMQQPSYSQYPPGQPQSQQQTGFPSQPTGYGLQPPQLVGSQLQPQQTGFPGQLQPQFTGFPGAAPQQQQQQQQLGGFQQSVQQPQFTGYPPQNQLLSLQAPSTTGLPTRPAPRTSSEVASSFNDGAGVAPPPPPKSAGSKIPSIRLSFITAQDQAKFEQLFKSAVGDSQTIDGGKAKELLLRSRLPGSELSKIWILSDTTKSGQLFFPEFALAMYLCNLRITGRELPPSLPEKIKNEVSSMVDIISFGVPDTQPEPSRSNVPSFDAPLLENKSAPPAPQQPQPQQPTNAHLLSQLAAQPTGFLPQQTGFQPNQSSFLGPSAGLAPQATGFPGQSQQQYLQTQPTGLMTNPQATGYSGPRPPLPPMPTGFGSNLSPAQTGGASALVAQPTGIPGQWGFVNAPSSGLPNIEALKQQLMPQPGREGGFTTAGLSGNASIPWAITKEEKKIYDDLFRAWDGFHKGFIGGDTAIEIMGQSGLNRQDLERIWTLADPHNRGRLNMDEFAVAMHLIYRKLNGYPVPSRLPPELIPPSTRNLNDSIGTVKSLLSQDAESRKASGAFLQPQKTGVSYLKEHSFRGGARSPGVGRKDATLFKNNDEAAAGYRSSARRRVGNNARAASPATSHTSEEELSVEQLKKKIRETQIMLDAVDFQDENRAEEDEALDRRDRREAESLMDRVRRIQDDIDTHPNATFRNLDNGAEKRSLRRQLQAYEDQVPQVASEVRRIERELAEAKLELFRLKDAKAHPNSASNIVGTGPGGAVTEADRIKARARARMQARAAELAGRPVPASADDDGAAARRLESESTVIRADRERNEAMTRDVEESVREFTRSLEDSFKEGGETSTREHERRRWEDALGVEDVIRDFIYDLKRGSRTAHVRKEEETRTLPTHDHRVRHEDPSIASRPSPAPSAGSVGSAPGATHEDRVAAARERAQRRIAERMAAAGLKPHTDSTETLVQRQEREKREREERLRRAEEEDAKREQERQRRLAEEQRGPAKPAATKPVGKKPPPAPPSRRGRTDSAGQADARPAVEETAATEQAAREQAIREEQQAQEEETKRLEMEAQQREQELLKEKEAQEARLRALEEQVRQGKVRKQEEKRRKEEAERSAKEQEAKLAAQRAELEMARERERQLQLELEGLEDESSSDEEGPVNITPQDSTPTQSQVLPAPSPAAAAPEPELEPPVSPEITSSASSHAAPSSFSPETESKNPYFRITSQAAENQVSSPPPVPQTTITSPKTDVQSTNPFHRLAQQEAAKPAFTAPGPLERKSRVRPEADDDWSAAGSDFDSSDDEDDERPGGGSAKQLASILFGTMAPPRPLSAMDDKSPSKSSTPVQDNTVASPVVPEASASLSAPAAPPPPPPPPPPPASAPMVVPSYDPSTAPPPPPPAPPIAPPAPPPGPPPPPGPPPPPAPPGAAAPAAPAGAADRSALLASIQMGKGLRKVQTNDRSSSSSAGRVLG</sequence>
<name>PAN1_ASPCL</name>
<gene>
    <name type="primary">pan1</name>
    <name type="ORF">ACLA_005570</name>
</gene>
<feature type="chain" id="PRO_0000349464" description="Actin cytoskeleton-regulatory complex protein pan1">
    <location>
        <begin position="1"/>
        <end position="1485"/>
    </location>
</feature>
<feature type="domain" description="EH 1" evidence="3">
    <location>
        <begin position="174"/>
        <end position="262"/>
    </location>
</feature>
<feature type="domain" description="EF-hand 1" evidence="5">
    <location>
        <begin position="206"/>
        <end position="241"/>
    </location>
</feature>
<feature type="domain" description="EH 2" evidence="3">
    <location>
        <begin position="465"/>
        <end position="554"/>
    </location>
</feature>
<feature type="domain" description="EF-hand 2" evidence="5">
    <location>
        <begin position="498"/>
        <end position="533"/>
    </location>
</feature>
<feature type="domain" description="WH2" evidence="4">
    <location>
        <begin position="1452"/>
        <end position="1469"/>
    </location>
</feature>
<feature type="region of interest" description="Disordered" evidence="6">
    <location>
        <begin position="1"/>
        <end position="161"/>
    </location>
</feature>
<feature type="region of interest" description="Disordered" evidence="6">
    <location>
        <begin position="268"/>
        <end position="309"/>
    </location>
</feature>
<feature type="region of interest" description="Disordered" evidence="6">
    <location>
        <begin position="323"/>
        <end position="342"/>
    </location>
</feature>
<feature type="region of interest" description="Disordered" evidence="6">
    <location>
        <begin position="620"/>
        <end position="649"/>
    </location>
</feature>
<feature type="region of interest" description="Disordered" evidence="6">
    <location>
        <begin position="799"/>
        <end position="871"/>
    </location>
</feature>
<feature type="region of interest" description="Disordered" evidence="6">
    <location>
        <begin position="895"/>
        <end position="1485"/>
    </location>
</feature>
<feature type="coiled-coil region" evidence="2">
    <location>
        <begin position="645"/>
        <end position="765"/>
    </location>
</feature>
<feature type="coiled-coil region" evidence="2">
    <location>
        <begin position="1054"/>
        <end position="1172"/>
    </location>
</feature>
<feature type="compositionally biased region" description="Low complexity" evidence="6">
    <location>
        <begin position="21"/>
        <end position="49"/>
    </location>
</feature>
<feature type="compositionally biased region" description="Polar residues" evidence="6">
    <location>
        <begin position="59"/>
        <end position="78"/>
    </location>
</feature>
<feature type="compositionally biased region" description="Low complexity" evidence="6">
    <location>
        <begin position="81"/>
        <end position="107"/>
    </location>
</feature>
<feature type="compositionally biased region" description="Polar residues" evidence="6">
    <location>
        <begin position="111"/>
        <end position="127"/>
    </location>
</feature>
<feature type="compositionally biased region" description="Polar residues" evidence="6">
    <location>
        <begin position="134"/>
        <end position="144"/>
    </location>
</feature>
<feature type="compositionally biased region" description="Pro residues" evidence="6">
    <location>
        <begin position="296"/>
        <end position="305"/>
    </location>
</feature>
<feature type="compositionally biased region" description="Polar residues" evidence="6">
    <location>
        <begin position="323"/>
        <end position="338"/>
    </location>
</feature>
<feature type="compositionally biased region" description="Basic and acidic residues" evidence="6">
    <location>
        <begin position="816"/>
        <end position="871"/>
    </location>
</feature>
<feature type="compositionally biased region" description="Basic and acidic residues" evidence="6">
    <location>
        <begin position="899"/>
        <end position="920"/>
    </location>
</feature>
<feature type="compositionally biased region" description="Low complexity" evidence="6">
    <location>
        <begin position="921"/>
        <end position="941"/>
    </location>
</feature>
<feature type="compositionally biased region" description="Basic and acidic residues" evidence="6">
    <location>
        <begin position="942"/>
        <end position="960"/>
    </location>
</feature>
<feature type="compositionally biased region" description="Basic and acidic residues" evidence="6">
    <location>
        <begin position="980"/>
        <end position="1016"/>
    </location>
</feature>
<feature type="compositionally biased region" description="Basic and acidic residues" evidence="6">
    <location>
        <begin position="1062"/>
        <end position="1137"/>
    </location>
</feature>
<feature type="compositionally biased region" description="Basic and acidic residues" evidence="6">
    <location>
        <begin position="1144"/>
        <end position="1156"/>
    </location>
</feature>
<feature type="compositionally biased region" description="Acidic residues" evidence="6">
    <location>
        <begin position="1161"/>
        <end position="1173"/>
    </location>
</feature>
<feature type="compositionally biased region" description="Polar residues" evidence="6">
    <location>
        <begin position="1177"/>
        <end position="1188"/>
    </location>
</feature>
<feature type="compositionally biased region" description="Low complexity" evidence="6">
    <location>
        <begin position="1189"/>
        <end position="1201"/>
    </location>
</feature>
<feature type="compositionally biased region" description="Low complexity" evidence="6">
    <location>
        <begin position="1210"/>
        <end position="1226"/>
    </location>
</feature>
<feature type="compositionally biased region" description="Polar residues" evidence="6">
    <location>
        <begin position="1238"/>
        <end position="1248"/>
    </location>
</feature>
<feature type="compositionally biased region" description="Polar residues" evidence="6">
    <location>
        <begin position="1255"/>
        <end position="1270"/>
    </location>
</feature>
<feature type="compositionally biased region" description="Basic and acidic residues" evidence="6">
    <location>
        <begin position="1290"/>
        <end position="1299"/>
    </location>
</feature>
<feature type="compositionally biased region" description="Polar residues" evidence="6">
    <location>
        <begin position="1353"/>
        <end position="1363"/>
    </location>
</feature>
<feature type="compositionally biased region" description="Low complexity" evidence="6">
    <location>
        <begin position="1364"/>
        <end position="1379"/>
    </location>
</feature>
<feature type="compositionally biased region" description="Pro residues" evidence="6">
    <location>
        <begin position="1380"/>
        <end position="1394"/>
    </location>
</feature>
<feature type="compositionally biased region" description="Pro residues" evidence="6">
    <location>
        <begin position="1406"/>
        <end position="1441"/>
    </location>
</feature>
<feature type="compositionally biased region" description="Low complexity" evidence="6">
    <location>
        <begin position="1442"/>
        <end position="1451"/>
    </location>
</feature>
<feature type="compositionally biased region" description="Polar residues" evidence="6">
    <location>
        <begin position="1472"/>
        <end position="1485"/>
    </location>
</feature>
<proteinExistence type="inferred from homology"/>
<protein>
    <recommendedName>
        <fullName>Actin cytoskeleton-regulatory complex protein pan1</fullName>
    </recommendedName>
</protein>